<organism>
    <name type="scientific">Mus musculus</name>
    <name type="common">Mouse</name>
    <dbReference type="NCBI Taxonomy" id="10090"/>
    <lineage>
        <taxon>Eukaryota</taxon>
        <taxon>Metazoa</taxon>
        <taxon>Chordata</taxon>
        <taxon>Craniata</taxon>
        <taxon>Vertebrata</taxon>
        <taxon>Euteleostomi</taxon>
        <taxon>Mammalia</taxon>
        <taxon>Eutheria</taxon>
        <taxon>Euarchontoglires</taxon>
        <taxon>Glires</taxon>
        <taxon>Rodentia</taxon>
        <taxon>Myomorpha</taxon>
        <taxon>Muroidea</taxon>
        <taxon>Muridae</taxon>
        <taxon>Murinae</taxon>
        <taxon>Mus</taxon>
        <taxon>Mus</taxon>
    </lineage>
</organism>
<name>NFKB2_MOUSE</name>
<proteinExistence type="evidence at protein level"/>
<evidence type="ECO:0000250" key="1"/>
<evidence type="ECO:0000250" key="2">
    <source>
        <dbReference type="UniProtKB" id="Q00653"/>
    </source>
</evidence>
<evidence type="ECO:0000255" key="3"/>
<evidence type="ECO:0000255" key="4">
    <source>
        <dbReference type="PROSITE-ProRule" id="PRU00265"/>
    </source>
</evidence>
<evidence type="ECO:0000256" key="5">
    <source>
        <dbReference type="SAM" id="MobiDB-lite"/>
    </source>
</evidence>
<evidence type="ECO:0000269" key="6">
    <source>
    </source>
</evidence>
<evidence type="ECO:0000269" key="7">
    <source>
    </source>
</evidence>
<evidence type="ECO:0007744" key="8">
    <source>
    </source>
</evidence>
<evidence type="ECO:0007744" key="9">
    <source>
    </source>
</evidence>
<evidence type="ECO:0007744" key="10">
    <source>
    </source>
</evidence>
<evidence type="ECO:0007829" key="11">
    <source>
        <dbReference type="PDB" id="3JV5"/>
    </source>
</evidence>
<evidence type="ECO:0007829" key="12">
    <source>
        <dbReference type="PDB" id="3JV6"/>
    </source>
</evidence>
<comment type="function">
    <text evidence="2 7">NF-kappa-B is a pleiotropic transcription factor present in almost all cell types and is the endpoint of a series of signal transduction events that are initiated by a vast array of stimuli related to many biological processes such as inflammation, immunity, differentiation, cell growth, tumorigenesis and apoptosis. NF-kappa-B is a homo- or heterodimeric complex formed by the Rel-like domain-containing proteins RELA/p65, RELB, NFKB1/p105, NFKB1/p50, REL and NFKB2/p52. The dimers bind at kappa-B sites in the DNA of their target genes and the individual dimers have distinct preferences for different kappa-B sites that they can bind with distinguishable affinity and specificity. Different dimer combinations act as transcriptional activators or repressors, respectively. NF-kappa-B is controlled by various mechanisms of post-translational modification and subcellular compartmentalization as well as by interactions with other cofactors or corepressors. NF-kappa-B complexes are held in the cytoplasm in an inactive state complexed with members of the NF-kappa-B inhibitor (I-kappa-B) family. In a conventional activation pathway, I-kappa-B is phosphorylated by I-kappa-B kinases (IKKs) in response to different activators, subsequently degraded thus liberating the active NF-kappa-B complex which translocates to the nucleus. In a non-canonical activation pathway, the MAP3K14-activated CHUK/IKKA homodimer phosphorylates NFKB2/p100 associated with RelB, inducing its proteolytic processing to NFKB2/p52 and the formation of NF-kappa-B RelB-p52 complexes. The NF-kappa-B heterodimeric RelB-p52 complex is a transcriptional activator. The NF-kappa-B p52-p52 homodimer is a transcriptional repressor. NFKB2 appears to have dual functions such as cytoplasmic retention of attached NF-kappa-B proteins by p100 and generation of p52 by a cotranslational processing. The proteasome-mediated process ensures the production of both p52 and p100 and preserves their independent function. p52 binds to the kappa-B consensus sequence 5'-GGRNNYYCC-3', located in the enhancer region of genes involved in immune response and acute phase reactions. p52 and p100 are respectively the minor and major form; the processing of p100 being relatively poor. Isoform p49 is a subunit of the NF-kappa-B protein complex, which stimulates the HIV enhancer in synergy with p65 (By similarity). In concert with RELB, regulates the circadian clock by repressing the transcriptional activator activity of the CLOCK-BMAL1 heterodimer.</text>
</comment>
<comment type="subunit">
    <text evidence="1">Component of the NF-kappa-B RelB-p52 complex. Homodimer; component of the NF-kappa-B p52-p52 complex. Component of the NF-kappa-B p65-p52 complex. Component of the NF-kappa-B p52-c-Rel complex. NFKB2/p52 interacts with NFKBIE. Component of a complex consisting of the NF-kappa-B p50-p50 homodimer and BCL3 (By similarity). Directly interacts with MEN1 (By similarity).</text>
</comment>
<comment type="interaction">
    <interactant intactId="EBI-1209166">
        <id>Q9WTK5</id>
    </interactant>
    <interactant intactId="EBI-644400">
        <id>Q04207</id>
        <label>Rela</label>
    </interactant>
    <organismsDiffer>false</organismsDiffer>
    <experiments>3</experiments>
</comment>
<comment type="interaction">
    <interactant intactId="EBI-1209166">
        <id>Q9WTK5</id>
    </interactant>
    <interactant intactId="EBI-1209145">
        <id>Q04863</id>
        <label>Relb</label>
    </interactant>
    <organismsDiffer>false</organismsDiffer>
    <experiments>3</experiments>
</comment>
<comment type="subcellular location">
    <subcellularLocation>
        <location evidence="1">Nucleus</location>
    </subcellularLocation>
    <subcellularLocation>
        <location evidence="1">Cytoplasm</location>
    </subcellularLocation>
    <text evidence="1">Nuclear, but also found in the cytoplasm in an inactive form complexed to an inhibitor (I-kappa-B).</text>
</comment>
<comment type="tissue specificity">
    <text evidence="6">Highly expressed in lymph nodes and thymus.</text>
</comment>
<comment type="domain">
    <text evidence="1">The C-terminus of p100 might be involved in cytoplasmic retention, inhibition of DNA-binding by p52 homodimers, and/or transcription activation.</text>
</comment>
<comment type="domain">
    <text>The glycine-rich region (GRR) appears to be a critical element in the generation of p52.</text>
</comment>
<comment type="PTM">
    <text evidence="1">While translation occurs, the particular unfolded structure after the GRR repeat promotes the generation of p52 making it an acceptable substrate for the proteasome. This process is known as cotranslational processing. The processed form is active and the unprocessed form acts as an inhibitor (I kappa B-like), being able to form cytosolic complexes with NF-kappa B, trapping it in the cytoplasm. Complete folding of the region downstream of the GRR repeat precludes processing (By similarity).</text>
</comment>
<comment type="PTM">
    <text evidence="1">Subsequent to MAP3K14-dependent serine phosphorylation, p100 polyubiquitination occurs then triggering its proteasome-dependent processing.</text>
</comment>
<comment type="PTM">
    <text evidence="1">Constitutive processing is tightly suppressed by its C-terminal processing inhibitory domain, named PID, which contains the death domain.</text>
</comment>
<comment type="PTM">
    <text evidence="2">Ubiquitinated by TRIM55; leading to processing by VCP and subsequent ubiquitin-dependent protein degradation by the proteasome.</text>
</comment>
<accession>Q9WTK5</accession>
<sequence>MDNCYDPGLDGIPEYDDFEFSPSIVEPKDPAPETADGPYLVIVEQPKQRGFRFRYGCEGPSHGGLPGASSEKGRKTYPTVKICNYEGPAKIEVDLVTHSDPPRAHAHSLVGKQCSELGVCAVSVGPKDMTAQFNNLGVLHVTKKNMMEIMIQKLQRQRLRSKPQGLTEAERRELEQEAKELKKVMDLSIVRLRFSAFLRASDGSFSLPLKPVISQPIHDSKSPGASNLKISRMDKTAGSVRGGDEVYLLCDKVQKDDIEVRFYEDDENGWQAFGDFSPTDVHKQYAIVFRTPPYHKMKIERPVTVFLQLKRKRGGDVSDSKQFTYYPLVEDKEEVQRKRRKALPTFSQPFGGGSHMGGGSGGSAGGYGGAGGGGSLGFFSSSLAYNPYQSGAAPMGCYPGGGGGAQMAGSRRDTDAGEGAEEPRTPPEAPQGEPQALDTLQRAREYNARLFGLAQRSARALLDYGVTADARALLAGQRHLLMAQDENGDTPLHLAIIHGQTGVIEQIAHVIYHAQYLGVINLTNHLHQTPLHLAVITGQTRVVSFLLQVGADPTLLDRHGDSALHLALRAGAAAPELLQALLRSGAHAVPQILHMPDFEGLYPVHLAVHARSPECLDLLVDCGAEVEAPERQGGRTALHLATEMEELGLVTHLVTKLHANVNARTFAGNTPLHLAAGLGSPTLTRLLLKAGADIHAENEEPLCPLPSPSTSGSDSDSEGPERDTQRNFRGHTPLDLTCSTKVKTLLLNAAQNTTEPPLAPPSPAGPGLSLGDAALQNLEQLLDGPEAQGSWAELAERLGLRSLVDTYRKTPSPSGSLLRSYKLAGGDLVGLLEALSDMGLHEGVRLLKGPETRDKLPSTEVKEDSAYGSQSVEQEAEKLCPPPEPPGGLCHGHPQPQVH</sequence>
<dbReference type="EMBL" id="AF155373">
    <property type="protein sequence ID" value="AAD39547.1"/>
    <property type="molecule type" value="mRNA"/>
</dbReference>
<dbReference type="EMBL" id="AF135125">
    <property type="protein sequence ID" value="AAD39462.1"/>
    <property type="molecule type" value="Genomic_DNA"/>
</dbReference>
<dbReference type="EMBL" id="AF155372">
    <property type="protein sequence ID" value="AAD39546.1"/>
    <property type="molecule type" value="mRNA"/>
</dbReference>
<dbReference type="EMBL" id="BC027423">
    <property type="protein sequence ID" value="AAH27423.1"/>
    <property type="molecule type" value="mRNA"/>
</dbReference>
<dbReference type="CCDS" id="CCDS29874.1"/>
<dbReference type="RefSeq" id="NP_001170840.1">
    <property type="nucleotide sequence ID" value="NM_001177369.1"/>
</dbReference>
<dbReference type="RefSeq" id="NP_062281.1">
    <property type="nucleotide sequence ID" value="NM_019408.3"/>
</dbReference>
<dbReference type="PDB" id="3JV5">
    <property type="method" value="X-ray"/>
    <property type="resolution" value="2.65 A"/>
    <property type="chains" value="A/B/C/D=225-328"/>
</dbReference>
<dbReference type="PDB" id="3JV6">
    <property type="method" value="X-ray"/>
    <property type="resolution" value="2.78 A"/>
    <property type="chains" value="B/D/F=225-331"/>
</dbReference>
<dbReference type="PDBsum" id="3JV5"/>
<dbReference type="PDBsum" id="3JV6"/>
<dbReference type="SMR" id="Q9WTK5"/>
<dbReference type="BioGRID" id="201752">
    <property type="interactions" value="12"/>
</dbReference>
<dbReference type="FunCoup" id="Q9WTK5">
    <property type="interactions" value="1866"/>
</dbReference>
<dbReference type="IntAct" id="Q9WTK5">
    <property type="interactions" value="4"/>
</dbReference>
<dbReference type="STRING" id="10090.ENSMUSP00000107512"/>
<dbReference type="ChEMBL" id="CHEMBL3879845"/>
<dbReference type="GlyGen" id="Q9WTK5">
    <property type="glycosylation" value="2 sites, 1 O-linked glycan (1 site)"/>
</dbReference>
<dbReference type="iPTMnet" id="Q9WTK5"/>
<dbReference type="PhosphoSitePlus" id="Q9WTK5"/>
<dbReference type="SwissPalm" id="Q9WTK5"/>
<dbReference type="jPOST" id="Q9WTK5"/>
<dbReference type="PaxDb" id="10090-ENSMUSP00000107512"/>
<dbReference type="ProteomicsDB" id="293551"/>
<dbReference type="Pumba" id="Q9WTK5"/>
<dbReference type="Antibodypedia" id="1322">
    <property type="antibodies" value="1021 antibodies from 48 providers"/>
</dbReference>
<dbReference type="DNASU" id="18034"/>
<dbReference type="Ensembl" id="ENSMUST00000073116.13">
    <property type="protein sequence ID" value="ENSMUSP00000072859.6"/>
    <property type="gene ID" value="ENSMUSG00000025225.16"/>
</dbReference>
<dbReference type="Ensembl" id="ENSMUST00000111881.4">
    <property type="protein sequence ID" value="ENSMUSP00000107512.3"/>
    <property type="gene ID" value="ENSMUSG00000025225.16"/>
</dbReference>
<dbReference type="Ensembl" id="ENSMUST00000236591.2">
    <property type="protein sequence ID" value="ENSMUSP00000157542.2"/>
    <property type="gene ID" value="ENSMUSG00000025225.16"/>
</dbReference>
<dbReference type="GeneID" id="18034"/>
<dbReference type="KEGG" id="mmu:18034"/>
<dbReference type="UCSC" id="uc008hst.2">
    <property type="organism name" value="mouse"/>
</dbReference>
<dbReference type="AGR" id="MGI:1099800"/>
<dbReference type="CTD" id="4791"/>
<dbReference type="MGI" id="MGI:1099800">
    <property type="gene designation" value="Nfkb2"/>
</dbReference>
<dbReference type="VEuPathDB" id="HostDB:ENSMUSG00000025225"/>
<dbReference type="eggNOG" id="KOG0504">
    <property type="taxonomic scope" value="Eukaryota"/>
</dbReference>
<dbReference type="GeneTree" id="ENSGT00940000160968"/>
<dbReference type="HOGENOM" id="CLU_004343_1_1_1"/>
<dbReference type="InParanoid" id="Q9WTK5"/>
<dbReference type="OMA" id="QIAHIIY"/>
<dbReference type="OrthoDB" id="10254686at2759"/>
<dbReference type="PhylomeDB" id="Q9WTK5"/>
<dbReference type="TreeFam" id="TF325632"/>
<dbReference type="Reactome" id="R-MMU-1810476">
    <property type="pathway name" value="RIP-mediated NFkB activation via ZBP1"/>
</dbReference>
<dbReference type="Reactome" id="R-MMU-3134963">
    <property type="pathway name" value="DEx/H-box helicases activate type I IFN and inflammatory cytokines production"/>
</dbReference>
<dbReference type="Reactome" id="R-MMU-3214841">
    <property type="pathway name" value="PKMTs methylate histone lysines"/>
</dbReference>
<dbReference type="Reactome" id="R-MMU-445989">
    <property type="pathway name" value="TAK1-dependent IKK and NF-kappa-B activation"/>
</dbReference>
<dbReference type="Reactome" id="R-MMU-448706">
    <property type="pathway name" value="Interleukin-1 processing"/>
</dbReference>
<dbReference type="Reactome" id="R-MMU-4755510">
    <property type="pathway name" value="SUMOylation of immune response proteins"/>
</dbReference>
<dbReference type="Reactome" id="R-MMU-5607761">
    <property type="pathway name" value="Dectin-1 mediated noncanonical NF-kB signaling"/>
</dbReference>
<dbReference type="Reactome" id="R-MMU-5676590">
    <property type="pathway name" value="NIK--&gt;noncanonical NF-kB signaling"/>
</dbReference>
<dbReference type="Reactome" id="R-MMU-933542">
    <property type="pathway name" value="TRAF6 mediated NF-kB activation"/>
</dbReference>
<dbReference type="BioGRID-ORCS" id="18034">
    <property type="hits" value="9 hits in 86 CRISPR screens"/>
</dbReference>
<dbReference type="ChiTaRS" id="Nfkb2">
    <property type="organism name" value="mouse"/>
</dbReference>
<dbReference type="EvolutionaryTrace" id="Q9WTK5"/>
<dbReference type="PRO" id="PR:Q9WTK5"/>
<dbReference type="Proteomes" id="UP000000589">
    <property type="component" value="Chromosome 19"/>
</dbReference>
<dbReference type="RNAct" id="Q9WTK5">
    <property type="molecule type" value="protein"/>
</dbReference>
<dbReference type="Bgee" id="ENSMUSG00000025225">
    <property type="expression patterns" value="Expressed in peripheral lymph node and 247 other cell types or tissues"/>
</dbReference>
<dbReference type="ExpressionAtlas" id="Q9WTK5">
    <property type="expression patterns" value="baseline and differential"/>
</dbReference>
<dbReference type="GO" id="GO:0033257">
    <property type="term" value="C:Bcl3/NF-kappaB2 complex"/>
    <property type="evidence" value="ECO:0007669"/>
    <property type="project" value="Ensembl"/>
</dbReference>
<dbReference type="GO" id="GO:0005829">
    <property type="term" value="C:cytosol"/>
    <property type="evidence" value="ECO:0007669"/>
    <property type="project" value="Ensembl"/>
</dbReference>
<dbReference type="GO" id="GO:0005654">
    <property type="term" value="C:nucleoplasm"/>
    <property type="evidence" value="ECO:0007669"/>
    <property type="project" value="Ensembl"/>
</dbReference>
<dbReference type="GO" id="GO:0005634">
    <property type="term" value="C:nucleus"/>
    <property type="evidence" value="ECO:0000314"/>
    <property type="project" value="MGI"/>
</dbReference>
<dbReference type="GO" id="GO:0001228">
    <property type="term" value="F:DNA-binding transcription activator activity, RNA polymerase II-specific"/>
    <property type="evidence" value="ECO:0007669"/>
    <property type="project" value="Ensembl"/>
</dbReference>
<dbReference type="GO" id="GO:0003700">
    <property type="term" value="F:DNA-binding transcription factor activity"/>
    <property type="evidence" value="ECO:0000314"/>
    <property type="project" value="MGI"/>
</dbReference>
<dbReference type="GO" id="GO:0000978">
    <property type="term" value="F:RNA polymerase II cis-regulatory region sequence-specific DNA binding"/>
    <property type="evidence" value="ECO:0007669"/>
    <property type="project" value="Ensembl"/>
</dbReference>
<dbReference type="GO" id="GO:0007249">
    <property type="term" value="P:canonical NF-kappaB signal transduction"/>
    <property type="evidence" value="ECO:0007669"/>
    <property type="project" value="Ensembl"/>
</dbReference>
<dbReference type="GO" id="GO:0030198">
    <property type="term" value="P:extracellular matrix organization"/>
    <property type="evidence" value="ECO:0000315"/>
    <property type="project" value="MGI"/>
</dbReference>
<dbReference type="GO" id="GO:0002268">
    <property type="term" value="P:follicular dendritic cell differentiation"/>
    <property type="evidence" value="ECO:0000315"/>
    <property type="project" value="MGI"/>
</dbReference>
<dbReference type="GO" id="GO:0002467">
    <property type="term" value="P:germinal center formation"/>
    <property type="evidence" value="ECO:0000315"/>
    <property type="project" value="MGI"/>
</dbReference>
<dbReference type="GO" id="GO:0048535">
    <property type="term" value="P:lymph node development"/>
    <property type="evidence" value="ECO:0000304"/>
    <property type="project" value="MGI"/>
</dbReference>
<dbReference type="GO" id="GO:0038061">
    <property type="term" value="P:non-canonical NF-kappaB signal transduction"/>
    <property type="evidence" value="ECO:0000314"/>
    <property type="project" value="MGI"/>
</dbReference>
<dbReference type="GO" id="GO:0034097">
    <property type="term" value="P:response to cytokine"/>
    <property type="evidence" value="ECO:0007669"/>
    <property type="project" value="Ensembl"/>
</dbReference>
<dbReference type="GO" id="GO:0032496">
    <property type="term" value="P:response to lipopolysaccharide"/>
    <property type="evidence" value="ECO:0007669"/>
    <property type="project" value="Ensembl"/>
</dbReference>
<dbReference type="GO" id="GO:0048511">
    <property type="term" value="P:rhythmic process"/>
    <property type="evidence" value="ECO:0007669"/>
    <property type="project" value="UniProtKB-KW"/>
</dbReference>
<dbReference type="GO" id="GO:0048536">
    <property type="term" value="P:spleen development"/>
    <property type="evidence" value="ECO:0000315"/>
    <property type="project" value="MGI"/>
</dbReference>
<dbReference type="CDD" id="cd08798">
    <property type="entry name" value="Death_NFkB2_p100"/>
    <property type="match status" value="1"/>
</dbReference>
<dbReference type="CDD" id="cd01177">
    <property type="entry name" value="IPT_NFkappaB"/>
    <property type="match status" value="1"/>
</dbReference>
<dbReference type="CDD" id="cd07934">
    <property type="entry name" value="RHD-n_NFkB2"/>
    <property type="match status" value="1"/>
</dbReference>
<dbReference type="FunFam" id="1.25.40.20:FF:000127">
    <property type="entry name" value="Nuclear factor NF-kappa-B p100 subunit isoform b"/>
    <property type="match status" value="1"/>
</dbReference>
<dbReference type="FunFam" id="1.10.533.10:FF:000061">
    <property type="entry name" value="nuclear factor NF-kappa-B p100 subunit isoform X1"/>
    <property type="match status" value="1"/>
</dbReference>
<dbReference type="FunFam" id="2.60.40.10:FF:000046">
    <property type="entry name" value="Nuclear factor NF-kappa-B p105 subunit"/>
    <property type="match status" value="1"/>
</dbReference>
<dbReference type="FunFam" id="2.60.40.340:FF:000004">
    <property type="entry name" value="Nuclear factor NF-kappa-B p105 subunit isoform 1"/>
    <property type="match status" value="1"/>
</dbReference>
<dbReference type="Gene3D" id="1.25.40.20">
    <property type="entry name" value="Ankyrin repeat-containing domain"/>
    <property type="match status" value="1"/>
</dbReference>
<dbReference type="Gene3D" id="1.10.533.10">
    <property type="entry name" value="Death Domain, Fas"/>
    <property type="match status" value="1"/>
</dbReference>
<dbReference type="Gene3D" id="2.60.40.10">
    <property type="entry name" value="Immunoglobulins"/>
    <property type="match status" value="1"/>
</dbReference>
<dbReference type="Gene3D" id="2.60.40.340">
    <property type="entry name" value="Rel homology domain (RHD), DNA-binding domain"/>
    <property type="match status" value="1"/>
</dbReference>
<dbReference type="InterPro" id="IPR002110">
    <property type="entry name" value="Ankyrin_rpt"/>
</dbReference>
<dbReference type="InterPro" id="IPR036770">
    <property type="entry name" value="Ankyrin_rpt-contain_sf"/>
</dbReference>
<dbReference type="InterPro" id="IPR011029">
    <property type="entry name" value="DEATH-like_dom_sf"/>
</dbReference>
<dbReference type="InterPro" id="IPR000488">
    <property type="entry name" value="Death_dom"/>
</dbReference>
<dbReference type="InterPro" id="IPR013783">
    <property type="entry name" value="Ig-like_fold"/>
</dbReference>
<dbReference type="InterPro" id="IPR014756">
    <property type="entry name" value="Ig_E-set"/>
</dbReference>
<dbReference type="InterPro" id="IPR002909">
    <property type="entry name" value="IPT_dom"/>
</dbReference>
<dbReference type="InterPro" id="IPR033926">
    <property type="entry name" value="IPT_NFkappaB"/>
</dbReference>
<dbReference type="InterPro" id="IPR000451">
    <property type="entry name" value="NFkB/Dor"/>
</dbReference>
<dbReference type="InterPro" id="IPR030497">
    <property type="entry name" value="NFkB_p100_RHD_N"/>
</dbReference>
<dbReference type="InterPro" id="IPR008967">
    <property type="entry name" value="p53-like_TF_DNA-bd_sf"/>
</dbReference>
<dbReference type="InterPro" id="IPR030492">
    <property type="entry name" value="RHD_CS"/>
</dbReference>
<dbReference type="InterPro" id="IPR032397">
    <property type="entry name" value="RHD_dimer"/>
</dbReference>
<dbReference type="InterPro" id="IPR011539">
    <property type="entry name" value="RHD_DNA_bind_dom"/>
</dbReference>
<dbReference type="InterPro" id="IPR037059">
    <property type="entry name" value="RHD_DNA_bind_dom_sf"/>
</dbReference>
<dbReference type="PANTHER" id="PTHR24169:SF21">
    <property type="entry name" value="NUCLEAR FACTOR NF-KAPPA-B P100 SUBUNIT"/>
    <property type="match status" value="1"/>
</dbReference>
<dbReference type="PANTHER" id="PTHR24169">
    <property type="entry name" value="NUCLEAR FACTOR NF-KAPPA-B PROTEIN"/>
    <property type="match status" value="1"/>
</dbReference>
<dbReference type="Pfam" id="PF12796">
    <property type="entry name" value="Ank_2"/>
    <property type="match status" value="2"/>
</dbReference>
<dbReference type="Pfam" id="PF00531">
    <property type="entry name" value="Death"/>
    <property type="match status" value="1"/>
</dbReference>
<dbReference type="Pfam" id="PF16179">
    <property type="entry name" value="RHD_dimer"/>
    <property type="match status" value="1"/>
</dbReference>
<dbReference type="Pfam" id="PF00554">
    <property type="entry name" value="RHD_DNA_bind"/>
    <property type="match status" value="1"/>
</dbReference>
<dbReference type="PRINTS" id="PR01415">
    <property type="entry name" value="ANKYRIN"/>
</dbReference>
<dbReference type="PRINTS" id="PR00057">
    <property type="entry name" value="NFKBTNSCPFCT"/>
</dbReference>
<dbReference type="SMART" id="SM00248">
    <property type="entry name" value="ANK"/>
    <property type="match status" value="7"/>
</dbReference>
<dbReference type="SMART" id="SM00005">
    <property type="entry name" value="DEATH"/>
    <property type="match status" value="1"/>
</dbReference>
<dbReference type="SMART" id="SM00429">
    <property type="entry name" value="IPT"/>
    <property type="match status" value="1"/>
</dbReference>
<dbReference type="SUPFAM" id="SSF48403">
    <property type="entry name" value="Ankyrin repeat"/>
    <property type="match status" value="1"/>
</dbReference>
<dbReference type="SUPFAM" id="SSF47986">
    <property type="entry name" value="DEATH domain"/>
    <property type="match status" value="1"/>
</dbReference>
<dbReference type="SUPFAM" id="SSF81296">
    <property type="entry name" value="E set domains"/>
    <property type="match status" value="1"/>
</dbReference>
<dbReference type="SUPFAM" id="SSF49417">
    <property type="entry name" value="p53-like transcription factors"/>
    <property type="match status" value="1"/>
</dbReference>
<dbReference type="PROSITE" id="PS50297">
    <property type="entry name" value="ANK_REP_REGION"/>
    <property type="match status" value="1"/>
</dbReference>
<dbReference type="PROSITE" id="PS50088">
    <property type="entry name" value="ANK_REPEAT"/>
    <property type="match status" value="5"/>
</dbReference>
<dbReference type="PROSITE" id="PS01204">
    <property type="entry name" value="REL_1"/>
    <property type="match status" value="1"/>
</dbReference>
<dbReference type="PROSITE" id="PS50254">
    <property type="entry name" value="REL_2"/>
    <property type="match status" value="1"/>
</dbReference>
<protein>
    <recommendedName>
        <fullName>Nuclear factor NF-kappa-B p100 subunit</fullName>
    </recommendedName>
    <alternativeName>
        <fullName>DNA-binding factor KBF2</fullName>
    </alternativeName>
    <alternativeName>
        <fullName>Nuclear factor of kappa light polypeptide gene enhancer in B-cells 2</fullName>
    </alternativeName>
    <component>
        <recommendedName>
            <fullName>Nuclear factor NF-kappa-B p52 subunit</fullName>
        </recommendedName>
    </component>
</protein>
<feature type="chain" id="PRO_0000030323" description="Nuclear factor NF-kappa-B p100 subunit">
    <location>
        <begin position="1"/>
        <end position="899"/>
    </location>
</feature>
<feature type="chain" id="PRO_0000030324" description="Nuclear factor NF-kappa-B p52 subunit">
    <location>
        <begin position="1"/>
        <end position="454"/>
    </location>
</feature>
<feature type="domain" description="RHD" evidence="4">
    <location>
        <begin position="35"/>
        <end position="224"/>
    </location>
</feature>
<feature type="repeat" description="ANK 1">
    <location>
        <begin position="487"/>
        <end position="516"/>
    </location>
</feature>
<feature type="repeat" description="ANK 2">
    <location>
        <begin position="526"/>
        <end position="555"/>
    </location>
</feature>
<feature type="repeat" description="ANK 3">
    <location>
        <begin position="559"/>
        <end position="590"/>
    </location>
</feature>
<feature type="repeat" description="ANK 4">
    <location>
        <begin position="599"/>
        <end position="628"/>
    </location>
</feature>
<feature type="repeat" description="ANK 5">
    <location>
        <begin position="633"/>
        <end position="663"/>
    </location>
</feature>
<feature type="repeat" description="ANK 6">
    <location>
        <begin position="667"/>
        <end position="696"/>
    </location>
</feature>
<feature type="repeat" description="ANK 7">
    <location>
        <begin position="729"/>
        <end position="755"/>
    </location>
</feature>
<feature type="domain" description="Death">
    <location>
        <begin position="764"/>
        <end position="851"/>
    </location>
</feature>
<feature type="region of interest" description="GRR">
    <location>
        <begin position="346"/>
        <end position="377"/>
    </location>
</feature>
<feature type="region of interest" description="Disordered" evidence="5">
    <location>
        <begin position="403"/>
        <end position="434"/>
    </location>
</feature>
<feature type="region of interest" description="Disordered" evidence="5">
    <location>
        <begin position="698"/>
        <end position="734"/>
    </location>
</feature>
<feature type="region of interest" description="Disordered" evidence="5">
    <location>
        <begin position="851"/>
        <end position="899"/>
    </location>
</feature>
<feature type="short sequence motif" description="Nuclear localization signal" evidence="3">
    <location>
        <begin position="337"/>
        <end position="341"/>
    </location>
</feature>
<feature type="compositionally biased region" description="Basic and acidic residues" evidence="5">
    <location>
        <begin position="410"/>
        <end position="425"/>
    </location>
</feature>
<feature type="compositionally biased region" description="Basic and acidic residues" evidence="5">
    <location>
        <begin position="851"/>
        <end position="865"/>
    </location>
</feature>
<feature type="compositionally biased region" description="Low complexity" evidence="5">
    <location>
        <begin position="887"/>
        <end position="899"/>
    </location>
</feature>
<feature type="site" description="Cleavage (when cotranslationally processed)">
    <location>
        <begin position="454"/>
        <end position="455"/>
    </location>
</feature>
<feature type="modified residue" description="Phosphoserine" evidence="2">
    <location>
        <position position="23"/>
    </location>
</feature>
<feature type="modified residue" description="Phosphoserine" evidence="2">
    <location>
        <position position="161"/>
    </location>
</feature>
<feature type="modified residue" description="Phosphothreonine" evidence="8 9 10">
    <location>
        <position position="425"/>
    </location>
</feature>
<feature type="modified residue" description="Phosphoserine" evidence="2">
    <location>
        <position position="713"/>
    </location>
</feature>
<feature type="modified residue" description="Phosphoserine" evidence="2">
    <location>
        <position position="715"/>
    </location>
</feature>
<feature type="modified residue" description="Phosphoserine" evidence="2">
    <location>
        <position position="717"/>
    </location>
</feature>
<feature type="modified residue" description="Phosphoserine" evidence="2">
    <location>
        <position position="812"/>
    </location>
</feature>
<feature type="modified residue" description="Phosphoserine; by MAP3K14" evidence="2">
    <location>
        <position position="865"/>
    </location>
</feature>
<feature type="modified residue" description="Phosphoserine; by MAP3K14" evidence="2">
    <location>
        <position position="869"/>
    </location>
</feature>
<feature type="cross-link" description="Glycyl lysine isopeptide (Lys-Gly) (interchain with G-Cter in ubiquitin)" evidence="2">
    <location>
        <position position="855"/>
    </location>
</feature>
<feature type="strand" evidence="11">
    <location>
        <begin position="230"/>
        <end position="234"/>
    </location>
</feature>
<feature type="strand" evidence="11">
    <location>
        <begin position="236"/>
        <end position="239"/>
    </location>
</feature>
<feature type="strand" evidence="11">
    <location>
        <begin position="245"/>
        <end position="252"/>
    </location>
</feature>
<feature type="helix" evidence="11">
    <location>
        <begin position="255"/>
        <end position="257"/>
    </location>
</feature>
<feature type="strand" evidence="11">
    <location>
        <begin position="258"/>
        <end position="263"/>
    </location>
</feature>
<feature type="turn" evidence="12">
    <location>
        <begin position="265"/>
        <end position="268"/>
    </location>
</feature>
<feature type="strand" evidence="11">
    <location>
        <begin position="271"/>
        <end position="273"/>
    </location>
</feature>
<feature type="helix" evidence="11">
    <location>
        <begin position="278"/>
        <end position="280"/>
    </location>
</feature>
<feature type="helix" evidence="11">
    <location>
        <begin position="282"/>
        <end position="284"/>
    </location>
</feature>
<feature type="strand" evidence="11">
    <location>
        <begin position="286"/>
        <end position="290"/>
    </location>
</feature>
<feature type="strand" evidence="11">
    <location>
        <begin position="303"/>
        <end position="314"/>
    </location>
</feature>
<feature type="strand" evidence="11">
    <location>
        <begin position="321"/>
        <end position="326"/>
    </location>
</feature>
<reference key="1">
    <citation type="journal article" date="1999" name="Immunogenetics">
        <title>Genomic organization and chromosomal mapping of mouse nuclear factor kappa B 2 (NFKB2).</title>
        <authorList>
            <person name="Paxian S."/>
            <person name="Liptay S."/>
            <person name="Adler G."/>
            <person name="Hameister H."/>
            <person name="Schmid R.M."/>
        </authorList>
    </citation>
    <scope>NUCLEOTIDE SEQUENCE [GENOMIC DNA]</scope>
    <scope>TISSUE SPECIFICITY</scope>
    <source>
        <strain>129/Sv</strain>
    </source>
</reference>
<reference key="2">
    <citation type="journal article" date="2004" name="Genome Res.">
        <title>The status, quality, and expansion of the NIH full-length cDNA project: the Mammalian Gene Collection (MGC).</title>
        <authorList>
            <consortium name="The MGC Project Team"/>
        </authorList>
    </citation>
    <scope>NUCLEOTIDE SEQUENCE [LARGE SCALE MRNA]</scope>
</reference>
<reference key="3">
    <citation type="journal article" date="2007" name="Proc. Natl. Acad. Sci. U.S.A.">
        <title>Large-scale phosphorylation analysis of mouse liver.</title>
        <authorList>
            <person name="Villen J."/>
            <person name="Beausoleil S.A."/>
            <person name="Gerber S.A."/>
            <person name="Gygi S.P."/>
        </authorList>
    </citation>
    <scope>PHOSPHORYLATION [LARGE SCALE ANALYSIS] AT THR-425</scope>
    <scope>IDENTIFICATION BY MASS SPECTROMETRY [LARGE SCALE ANALYSIS]</scope>
    <source>
        <tissue>Liver</tissue>
    </source>
</reference>
<reference key="4">
    <citation type="journal article" date="2009" name="Immunity">
        <title>The phagosomal proteome in interferon-gamma-activated macrophages.</title>
        <authorList>
            <person name="Trost M."/>
            <person name="English L."/>
            <person name="Lemieux S."/>
            <person name="Courcelles M."/>
            <person name="Desjardins M."/>
            <person name="Thibault P."/>
        </authorList>
    </citation>
    <scope>PHOSPHORYLATION [LARGE SCALE ANALYSIS] AT THR-425</scope>
    <scope>IDENTIFICATION BY MASS SPECTROMETRY [LARGE SCALE ANALYSIS]</scope>
</reference>
<reference key="5">
    <citation type="journal article" date="2010" name="Cell">
        <title>A tissue-specific atlas of mouse protein phosphorylation and expression.</title>
        <authorList>
            <person name="Huttlin E.L."/>
            <person name="Jedrychowski M.P."/>
            <person name="Elias J.E."/>
            <person name="Goswami T."/>
            <person name="Rad R."/>
            <person name="Beausoleil S.A."/>
            <person name="Villen J."/>
            <person name="Haas W."/>
            <person name="Sowa M.E."/>
            <person name="Gygi S.P."/>
        </authorList>
    </citation>
    <scope>PHOSPHORYLATION [LARGE SCALE ANALYSIS] AT THR-425</scope>
    <scope>IDENTIFICATION BY MASS SPECTROMETRY [LARGE SCALE ANALYSIS]</scope>
    <source>
        <tissue>Heart</tissue>
        <tissue>Kidney</tissue>
        <tissue>Liver</tissue>
        <tissue>Lung</tissue>
        <tissue>Pancreas</tissue>
        <tissue>Spleen</tissue>
    </source>
</reference>
<reference key="6">
    <citation type="journal article" date="2012" name="Cell Cycle">
        <title>The RelB subunit of NFkappaB acts as a negative regulator of circadian gene expression.</title>
        <authorList>
            <person name="Bellet M.M."/>
            <person name="Zocchi L."/>
            <person name="Sassone-Corsi P."/>
        </authorList>
    </citation>
    <scope>FUNCTION</scope>
</reference>
<keyword id="KW-0002">3D-structure</keyword>
<keyword id="KW-0010">Activator</keyword>
<keyword id="KW-0040">ANK repeat</keyword>
<keyword id="KW-0090">Biological rhythms</keyword>
<keyword id="KW-0963">Cytoplasm</keyword>
<keyword id="KW-0238">DNA-binding</keyword>
<keyword id="KW-1017">Isopeptide bond</keyword>
<keyword id="KW-0539">Nucleus</keyword>
<keyword id="KW-0597">Phosphoprotein</keyword>
<keyword id="KW-1185">Reference proteome</keyword>
<keyword id="KW-0677">Repeat</keyword>
<keyword id="KW-0678">Repressor</keyword>
<keyword id="KW-0804">Transcription</keyword>
<keyword id="KW-0805">Transcription regulation</keyword>
<keyword id="KW-0832">Ubl conjugation</keyword>
<gene>
    <name type="primary">Nfkb2</name>
</gene>